<gene>
    <name evidence="1" type="primary">ppnP</name>
    <name type="ordered locus">SeAg_B0428</name>
</gene>
<organism>
    <name type="scientific">Salmonella agona (strain SL483)</name>
    <dbReference type="NCBI Taxonomy" id="454166"/>
    <lineage>
        <taxon>Bacteria</taxon>
        <taxon>Pseudomonadati</taxon>
        <taxon>Pseudomonadota</taxon>
        <taxon>Gammaproteobacteria</taxon>
        <taxon>Enterobacterales</taxon>
        <taxon>Enterobacteriaceae</taxon>
        <taxon>Salmonella</taxon>
    </lineage>
</organism>
<proteinExistence type="inferred from homology"/>
<dbReference type="EC" id="2.4.2.1" evidence="1"/>
<dbReference type="EC" id="2.4.2.2" evidence="1"/>
<dbReference type="EMBL" id="CP001138">
    <property type="protein sequence ID" value="ACH48989.1"/>
    <property type="molecule type" value="Genomic_DNA"/>
</dbReference>
<dbReference type="RefSeq" id="WP_000941953.1">
    <property type="nucleotide sequence ID" value="NC_011149.1"/>
</dbReference>
<dbReference type="SMR" id="B5EWS3"/>
<dbReference type="KEGG" id="sea:SeAg_B0428"/>
<dbReference type="HOGENOM" id="CLU_157874_0_0_6"/>
<dbReference type="Proteomes" id="UP000008819">
    <property type="component" value="Chromosome"/>
</dbReference>
<dbReference type="GO" id="GO:0005829">
    <property type="term" value="C:cytosol"/>
    <property type="evidence" value="ECO:0007669"/>
    <property type="project" value="TreeGrafter"/>
</dbReference>
<dbReference type="GO" id="GO:0047975">
    <property type="term" value="F:guanosine phosphorylase activity"/>
    <property type="evidence" value="ECO:0007669"/>
    <property type="project" value="UniProtKB-EC"/>
</dbReference>
<dbReference type="GO" id="GO:0004731">
    <property type="term" value="F:purine-nucleoside phosphorylase activity"/>
    <property type="evidence" value="ECO:0007669"/>
    <property type="project" value="UniProtKB-UniRule"/>
</dbReference>
<dbReference type="GO" id="GO:0009032">
    <property type="term" value="F:thymidine phosphorylase activity"/>
    <property type="evidence" value="ECO:0007669"/>
    <property type="project" value="UniProtKB-EC"/>
</dbReference>
<dbReference type="GO" id="GO:0004850">
    <property type="term" value="F:uridine phosphorylase activity"/>
    <property type="evidence" value="ECO:0007669"/>
    <property type="project" value="UniProtKB-EC"/>
</dbReference>
<dbReference type="CDD" id="cd20296">
    <property type="entry name" value="cupin_PpnP-like"/>
    <property type="match status" value="1"/>
</dbReference>
<dbReference type="FunFam" id="2.60.120.10:FF:000016">
    <property type="entry name" value="Pyrimidine/purine nucleoside phosphorylase"/>
    <property type="match status" value="1"/>
</dbReference>
<dbReference type="Gene3D" id="2.60.120.10">
    <property type="entry name" value="Jelly Rolls"/>
    <property type="match status" value="1"/>
</dbReference>
<dbReference type="HAMAP" id="MF_01537">
    <property type="entry name" value="Nucleos_phosphorylase_PpnP"/>
    <property type="match status" value="1"/>
</dbReference>
<dbReference type="InterPro" id="IPR009664">
    <property type="entry name" value="Ppnp"/>
</dbReference>
<dbReference type="InterPro" id="IPR014710">
    <property type="entry name" value="RmlC-like_jellyroll"/>
</dbReference>
<dbReference type="InterPro" id="IPR011051">
    <property type="entry name" value="RmlC_Cupin_sf"/>
</dbReference>
<dbReference type="NCBIfam" id="NF007875">
    <property type="entry name" value="PRK10579.1"/>
    <property type="match status" value="1"/>
</dbReference>
<dbReference type="PANTHER" id="PTHR36540">
    <property type="entry name" value="PYRIMIDINE/PURINE NUCLEOSIDE PHOSPHORYLASE"/>
    <property type="match status" value="1"/>
</dbReference>
<dbReference type="PANTHER" id="PTHR36540:SF1">
    <property type="entry name" value="PYRIMIDINE_PURINE NUCLEOSIDE PHOSPHORYLASE"/>
    <property type="match status" value="1"/>
</dbReference>
<dbReference type="Pfam" id="PF06865">
    <property type="entry name" value="Ppnp"/>
    <property type="match status" value="1"/>
</dbReference>
<dbReference type="SUPFAM" id="SSF51182">
    <property type="entry name" value="RmlC-like cupins"/>
    <property type="match status" value="1"/>
</dbReference>
<comment type="function">
    <text evidence="1">Catalyzes the phosphorolysis of diverse nucleosides, yielding D-ribose 1-phosphate and the respective free bases. Can use uridine, adenosine, guanosine, cytidine, thymidine, inosine and xanthosine as substrates. Also catalyzes the reverse reactions.</text>
</comment>
<comment type="catalytic activity">
    <reaction evidence="1">
        <text>a purine D-ribonucleoside + phosphate = a purine nucleobase + alpha-D-ribose 1-phosphate</text>
        <dbReference type="Rhea" id="RHEA:19805"/>
        <dbReference type="ChEBI" id="CHEBI:26386"/>
        <dbReference type="ChEBI" id="CHEBI:43474"/>
        <dbReference type="ChEBI" id="CHEBI:57720"/>
        <dbReference type="ChEBI" id="CHEBI:142355"/>
        <dbReference type="EC" id="2.4.2.1"/>
    </reaction>
</comment>
<comment type="catalytic activity">
    <reaction evidence="1">
        <text>adenosine + phosphate = alpha-D-ribose 1-phosphate + adenine</text>
        <dbReference type="Rhea" id="RHEA:27642"/>
        <dbReference type="ChEBI" id="CHEBI:16335"/>
        <dbReference type="ChEBI" id="CHEBI:16708"/>
        <dbReference type="ChEBI" id="CHEBI:43474"/>
        <dbReference type="ChEBI" id="CHEBI:57720"/>
        <dbReference type="EC" id="2.4.2.1"/>
    </reaction>
</comment>
<comment type="catalytic activity">
    <reaction evidence="1">
        <text>cytidine + phosphate = cytosine + alpha-D-ribose 1-phosphate</text>
        <dbReference type="Rhea" id="RHEA:52540"/>
        <dbReference type="ChEBI" id="CHEBI:16040"/>
        <dbReference type="ChEBI" id="CHEBI:17562"/>
        <dbReference type="ChEBI" id="CHEBI:43474"/>
        <dbReference type="ChEBI" id="CHEBI:57720"/>
        <dbReference type="EC" id="2.4.2.2"/>
    </reaction>
</comment>
<comment type="catalytic activity">
    <reaction evidence="1">
        <text>guanosine + phosphate = alpha-D-ribose 1-phosphate + guanine</text>
        <dbReference type="Rhea" id="RHEA:13233"/>
        <dbReference type="ChEBI" id="CHEBI:16235"/>
        <dbReference type="ChEBI" id="CHEBI:16750"/>
        <dbReference type="ChEBI" id="CHEBI:43474"/>
        <dbReference type="ChEBI" id="CHEBI:57720"/>
        <dbReference type="EC" id="2.4.2.1"/>
    </reaction>
</comment>
<comment type="catalytic activity">
    <reaction evidence="1">
        <text>inosine + phosphate = alpha-D-ribose 1-phosphate + hypoxanthine</text>
        <dbReference type="Rhea" id="RHEA:27646"/>
        <dbReference type="ChEBI" id="CHEBI:17368"/>
        <dbReference type="ChEBI" id="CHEBI:17596"/>
        <dbReference type="ChEBI" id="CHEBI:43474"/>
        <dbReference type="ChEBI" id="CHEBI:57720"/>
        <dbReference type="EC" id="2.4.2.1"/>
    </reaction>
</comment>
<comment type="catalytic activity">
    <reaction evidence="1">
        <text>thymidine + phosphate = 2-deoxy-alpha-D-ribose 1-phosphate + thymine</text>
        <dbReference type="Rhea" id="RHEA:16037"/>
        <dbReference type="ChEBI" id="CHEBI:17748"/>
        <dbReference type="ChEBI" id="CHEBI:17821"/>
        <dbReference type="ChEBI" id="CHEBI:43474"/>
        <dbReference type="ChEBI" id="CHEBI:57259"/>
        <dbReference type="EC" id="2.4.2.2"/>
    </reaction>
</comment>
<comment type="catalytic activity">
    <reaction evidence="1">
        <text>uridine + phosphate = alpha-D-ribose 1-phosphate + uracil</text>
        <dbReference type="Rhea" id="RHEA:24388"/>
        <dbReference type="ChEBI" id="CHEBI:16704"/>
        <dbReference type="ChEBI" id="CHEBI:17568"/>
        <dbReference type="ChEBI" id="CHEBI:43474"/>
        <dbReference type="ChEBI" id="CHEBI:57720"/>
        <dbReference type="EC" id="2.4.2.2"/>
    </reaction>
</comment>
<comment type="catalytic activity">
    <reaction evidence="1">
        <text>xanthosine + phosphate = alpha-D-ribose 1-phosphate + xanthine</text>
        <dbReference type="Rhea" id="RHEA:27638"/>
        <dbReference type="ChEBI" id="CHEBI:17712"/>
        <dbReference type="ChEBI" id="CHEBI:18107"/>
        <dbReference type="ChEBI" id="CHEBI:43474"/>
        <dbReference type="ChEBI" id="CHEBI:57720"/>
        <dbReference type="EC" id="2.4.2.1"/>
    </reaction>
</comment>
<comment type="similarity">
    <text evidence="1">Belongs to the nucleoside phosphorylase PpnP family.</text>
</comment>
<protein>
    <recommendedName>
        <fullName evidence="1">Pyrimidine/purine nucleoside phosphorylase</fullName>
        <ecNumber evidence="1">2.4.2.1</ecNumber>
        <ecNumber evidence="1">2.4.2.2</ecNumber>
    </recommendedName>
    <alternativeName>
        <fullName evidence="1">Adenosine phosphorylase</fullName>
    </alternativeName>
    <alternativeName>
        <fullName evidence="1">Cytidine phosphorylase</fullName>
    </alternativeName>
    <alternativeName>
        <fullName evidence="1">Guanosine phosphorylase</fullName>
    </alternativeName>
    <alternativeName>
        <fullName evidence="1">Inosine phosphorylase</fullName>
    </alternativeName>
    <alternativeName>
        <fullName evidence="1">Thymidine phosphorylase</fullName>
    </alternativeName>
    <alternativeName>
        <fullName evidence="1">Uridine phosphorylase</fullName>
    </alternativeName>
    <alternativeName>
        <fullName evidence="1">Xanthosine phosphorylase</fullName>
    </alternativeName>
</protein>
<reference key="1">
    <citation type="journal article" date="2011" name="J. Bacteriol.">
        <title>Comparative genomics of 28 Salmonella enterica isolates: evidence for CRISPR-mediated adaptive sublineage evolution.</title>
        <authorList>
            <person name="Fricke W.F."/>
            <person name="Mammel M.K."/>
            <person name="McDermott P.F."/>
            <person name="Tartera C."/>
            <person name="White D.G."/>
            <person name="Leclerc J.E."/>
            <person name="Ravel J."/>
            <person name="Cebula T.A."/>
        </authorList>
    </citation>
    <scope>NUCLEOTIDE SEQUENCE [LARGE SCALE GENOMIC DNA]</scope>
    <source>
        <strain>SL483</strain>
    </source>
</reference>
<name>PPNP_SALA4</name>
<accession>B5EWS3</accession>
<sequence>MLQSNEYFSGKVKSIGFTSSSTGRASVGVMAEGEYTFGTAEPEEMTVVSGALKVLLPGTVEWKVYTAGEVFNVPGHSEFHLQVAEPTSYLCRYL</sequence>
<feature type="chain" id="PRO_1000198673" description="Pyrimidine/purine nucleoside phosphorylase">
    <location>
        <begin position="1"/>
        <end position="94"/>
    </location>
</feature>
<evidence type="ECO:0000255" key="1">
    <source>
        <dbReference type="HAMAP-Rule" id="MF_01537"/>
    </source>
</evidence>
<keyword id="KW-0328">Glycosyltransferase</keyword>
<keyword id="KW-0808">Transferase</keyword>